<name>CAT4_ECOLX</name>
<reference key="1">
    <citation type="journal article" date="1992" name="J. Bacteriol.">
        <title>The chloramphenicol acetyltransferase gene of Tn2424: a new breed of cat.</title>
        <authorList>
            <person name="Parent R."/>
            <person name="Roy P.H."/>
        </authorList>
    </citation>
    <scope>NUCLEOTIDE SEQUENCE [GENOMIC DNA]</scope>
    <source>
        <transposon>Tn2424</transposon>
    </source>
</reference>
<reference key="2">
    <citation type="submission" date="1998-02" db="EMBL/GenBank/DDBJ databases">
        <authorList>
            <person name="Gravel A."/>
            <person name="Parent R."/>
            <person name="Roy P.H."/>
        </authorList>
    </citation>
    <scope>NUCLEOTIDE SEQUENCE [GENOMIC DNA]</scope>
    <source>
        <transposon>Tn2424</transposon>
    </source>
</reference>
<reference key="3">
    <citation type="submission" date="2008-11" db="EMBL/GenBank/DDBJ databases">
        <authorList>
            <person name="Gravel A."/>
            <person name="Parent R."/>
            <person name="Roy P.H."/>
        </authorList>
    </citation>
    <scope>SEQUENCE REVISION TO 70</scope>
</reference>
<evidence type="ECO:0000250" key="1"/>
<evidence type="ECO:0000305" key="2"/>
<accession>P26838</accession>
<protein>
    <recommendedName>
        <fullName>Chloramphenicol acetyltransferase</fullName>
        <ecNumber>2.3.1.28</ecNumber>
    </recommendedName>
</protein>
<organism>
    <name type="scientific">Escherichia coli</name>
    <dbReference type="NCBI Taxonomy" id="562"/>
    <lineage>
        <taxon>Bacteria</taxon>
        <taxon>Pseudomonadati</taxon>
        <taxon>Pseudomonadota</taxon>
        <taxon>Gammaproteobacteria</taxon>
        <taxon>Enterobacterales</taxon>
        <taxon>Enterobacteriaceae</taxon>
        <taxon>Escherichia</taxon>
    </lineage>
</organism>
<gene>
    <name type="primary">catB2</name>
    <name type="synonym">cat</name>
</gene>
<comment type="function">
    <text>This enzyme is an effector of chloramphenicol resistance in bacteria.</text>
</comment>
<comment type="catalytic activity">
    <reaction>
        <text>chloramphenicol + acetyl-CoA = chloramphenicol 3-acetate + CoA</text>
        <dbReference type="Rhea" id="RHEA:18421"/>
        <dbReference type="ChEBI" id="CHEBI:16730"/>
        <dbReference type="ChEBI" id="CHEBI:17698"/>
        <dbReference type="ChEBI" id="CHEBI:57287"/>
        <dbReference type="ChEBI" id="CHEBI:57288"/>
        <dbReference type="EC" id="2.3.1.28"/>
    </reaction>
</comment>
<comment type="similarity">
    <text evidence="2">Belongs to the transferase hexapeptide repeat family.</text>
</comment>
<geneLocation type="plasmid">
    <name>IncFII NR79</name>
</geneLocation>
<proteinExistence type="inferred from homology"/>
<keyword id="KW-0012">Acyltransferase</keyword>
<keyword id="KW-0046">Antibiotic resistance</keyword>
<keyword id="KW-0614">Plasmid</keyword>
<keyword id="KW-0677">Repeat</keyword>
<keyword id="KW-0808">Transferase</keyword>
<keyword id="KW-0814">Transposable element</keyword>
<feature type="chain" id="PRO_0000068658" description="Chloramphenicol acetyltransferase">
    <location>
        <begin position="1"/>
        <end position="210"/>
    </location>
</feature>
<feature type="active site" evidence="1">
    <location>
        <position position="79"/>
    </location>
</feature>
<dbReference type="EC" id="2.3.1.28"/>
<dbReference type="EMBL" id="AF047479">
    <property type="protein sequence ID" value="AAC14737.2"/>
    <property type="molecule type" value="Genomic_DNA"/>
</dbReference>
<dbReference type="PIR" id="A41857">
    <property type="entry name" value="A41857"/>
</dbReference>
<dbReference type="SMR" id="P26838"/>
<dbReference type="KEGG" id="ag:AAC14737"/>
<dbReference type="GO" id="GO:0008811">
    <property type="term" value="F:chloramphenicol O-acetyltransferase activity"/>
    <property type="evidence" value="ECO:0007669"/>
    <property type="project" value="UniProtKB-EC"/>
</dbReference>
<dbReference type="GO" id="GO:0046677">
    <property type="term" value="P:response to antibiotic"/>
    <property type="evidence" value="ECO:0007669"/>
    <property type="project" value="UniProtKB-KW"/>
</dbReference>
<dbReference type="CDD" id="cd03349">
    <property type="entry name" value="LbH_XAT"/>
    <property type="match status" value="1"/>
</dbReference>
<dbReference type="Gene3D" id="2.160.10.10">
    <property type="entry name" value="Hexapeptide repeat proteins"/>
    <property type="match status" value="1"/>
</dbReference>
<dbReference type="InterPro" id="IPR001451">
    <property type="entry name" value="Hexapep"/>
</dbReference>
<dbReference type="InterPro" id="IPR018357">
    <property type="entry name" value="Hexapep_transf_CS"/>
</dbReference>
<dbReference type="InterPro" id="IPR050179">
    <property type="entry name" value="Trans_hexapeptide_repeat"/>
</dbReference>
<dbReference type="InterPro" id="IPR011004">
    <property type="entry name" value="Trimer_LpxA-like_sf"/>
</dbReference>
<dbReference type="NCBIfam" id="NF000490">
    <property type="entry name" value="chloram_CatB"/>
    <property type="match status" value="1"/>
</dbReference>
<dbReference type="PANTHER" id="PTHR43300">
    <property type="entry name" value="ACETYLTRANSFERASE"/>
    <property type="match status" value="1"/>
</dbReference>
<dbReference type="PANTHER" id="PTHR43300:SF12">
    <property type="entry name" value="CHLORAMPHENICOL ACETYLTRANSFERASE"/>
    <property type="match status" value="1"/>
</dbReference>
<dbReference type="Pfam" id="PF00132">
    <property type="entry name" value="Hexapep"/>
    <property type="match status" value="1"/>
</dbReference>
<dbReference type="SUPFAM" id="SSF51161">
    <property type="entry name" value="Trimeric LpxA-like enzymes"/>
    <property type="match status" value="1"/>
</dbReference>
<dbReference type="PROSITE" id="PS00101">
    <property type="entry name" value="HEXAPEP_TRANSFERASES"/>
    <property type="match status" value="1"/>
</dbReference>
<sequence length="210" mass="23531">MTNYFESPFKGKLLTEQVKNPNIKVGRYSYYSGYYHGHSFDDCARYLLPDRDDVDQLIIGSFCSIGSGAAFIMAGNQGHRYDWVSSFPFFYMNEEPAFAKSVDAFQRAGDTVIGSDVWIGSEAMIMPGIKIGHGAVIGSRALVAKDVEPYTIVGGNPAKSIRKRFSEEEISMLLDMAWWDWPLEQIKEAMPFLCSSGIASLYRRWQGTSA</sequence>